<evidence type="ECO:0000250" key="1"/>
<evidence type="ECO:0000269" key="2">
    <source>
    </source>
</evidence>
<evidence type="ECO:0000305" key="3"/>
<name>CCD_CROSA</name>
<feature type="chain" id="PRO_0000282606" description="Carotenoid 9,10(9',10')-cleavage dioxygenase">
    <location>
        <begin position="1"/>
        <end position="546"/>
    </location>
</feature>
<feature type="binding site" evidence="1">
    <location>
        <position position="226"/>
    </location>
    <ligand>
        <name>Fe cation</name>
        <dbReference type="ChEBI" id="CHEBI:24875"/>
        <note>catalytic</note>
    </ligand>
</feature>
<feature type="binding site" evidence="1">
    <location>
        <position position="274"/>
    </location>
    <ligand>
        <name>Fe cation</name>
        <dbReference type="ChEBI" id="CHEBI:24875"/>
        <note>catalytic</note>
    </ligand>
</feature>
<feature type="binding site" evidence="1">
    <location>
        <position position="340"/>
    </location>
    <ligand>
        <name>Fe cation</name>
        <dbReference type="ChEBI" id="CHEBI:24875"/>
        <note>catalytic</note>
    </ligand>
</feature>
<feature type="binding site" evidence="1">
    <location>
        <position position="530"/>
    </location>
    <ligand>
        <name>Fe cation</name>
        <dbReference type="ChEBI" id="CHEBI:24875"/>
        <note>catalytic</note>
    </ligand>
</feature>
<comment type="function">
    <text evidence="2">Cleaves a variety of carotenoids symmetrically at both the 9-10 and 9'-10' double bonds. Catalyzes the formation of 4,9-dimethyldodeca-2,4,6,8,10-pentaene-1,12-dialdehyde and probably hydroxydihydro-beta-ionone from zeaxanthin.</text>
</comment>
<comment type="catalytic activity">
    <reaction evidence="2">
        <text>all-trans-zeaxanthin + 2 O2 = 4,9-dimethyldodeca-2,4,6,8,10-pentaenedial + 2 (3R)-hydroxy-beta-ionone</text>
        <dbReference type="Rhea" id="RHEA:26393"/>
        <dbReference type="ChEBI" id="CHEBI:15379"/>
        <dbReference type="ChEBI" id="CHEBI:27547"/>
        <dbReference type="ChEBI" id="CHEBI:53171"/>
        <dbReference type="ChEBI" id="CHEBI:53173"/>
        <dbReference type="EC" id="1.14.99.n4"/>
    </reaction>
</comment>
<comment type="cofactor">
    <cofactor evidence="1">
        <name>Fe(2+)</name>
        <dbReference type="ChEBI" id="CHEBI:29033"/>
    </cofactor>
    <text evidence="1">Binds 1 Fe(2+) ion per subunit.</text>
</comment>
<comment type="subcellular location">
    <subcellularLocation>
        <location evidence="2">Cytoplasm</location>
    </subcellularLocation>
</comment>
<comment type="tissue specificity">
    <text evidence="2">In vegetative and floral tissues.</text>
</comment>
<comment type="induction">
    <text evidence="2">Constitutively expressed at low level in all tissues.</text>
</comment>
<comment type="similarity">
    <text evidence="3">Belongs to the carotenoid oxygenase family.</text>
</comment>
<proteinExistence type="evidence at protein level"/>
<organism>
    <name type="scientific">Crocus sativus</name>
    <name type="common">Saffron</name>
    <dbReference type="NCBI Taxonomy" id="82528"/>
    <lineage>
        <taxon>Eukaryota</taxon>
        <taxon>Viridiplantae</taxon>
        <taxon>Streptophyta</taxon>
        <taxon>Embryophyta</taxon>
        <taxon>Tracheophyta</taxon>
        <taxon>Spermatophyta</taxon>
        <taxon>Magnoliopsida</taxon>
        <taxon>Liliopsida</taxon>
        <taxon>Asparagales</taxon>
        <taxon>Iridaceae</taxon>
        <taxon>Crocoideae</taxon>
        <taxon>Croceae</taxon>
        <taxon>Crocus</taxon>
    </lineage>
</organism>
<protein>
    <recommendedName>
        <fullName>Carotenoid 9,10(9',10')-cleavage dioxygenase</fullName>
        <ecNumber>1.14.99.n4</ecNumber>
    </recommendedName>
    <alternativeName>
        <fullName>CsCCD</fullName>
    </alternativeName>
</protein>
<accession>Q84KG5</accession>
<gene>
    <name type="primary">CCD</name>
</gene>
<dbReference type="EC" id="1.14.99.n4"/>
<dbReference type="EMBL" id="AJ132927">
    <property type="protein sequence ID" value="CAC79592.1"/>
    <property type="molecule type" value="mRNA"/>
</dbReference>
<dbReference type="SMR" id="Q84KG5"/>
<dbReference type="GO" id="GO:0009570">
    <property type="term" value="C:chloroplast stroma"/>
    <property type="evidence" value="ECO:0007669"/>
    <property type="project" value="TreeGrafter"/>
</dbReference>
<dbReference type="GO" id="GO:0010436">
    <property type="term" value="F:carotenoid dioxygenase activity"/>
    <property type="evidence" value="ECO:0007669"/>
    <property type="project" value="TreeGrafter"/>
</dbReference>
<dbReference type="GO" id="GO:0046872">
    <property type="term" value="F:metal ion binding"/>
    <property type="evidence" value="ECO:0007669"/>
    <property type="project" value="UniProtKB-KW"/>
</dbReference>
<dbReference type="GO" id="GO:0016121">
    <property type="term" value="P:carotene catabolic process"/>
    <property type="evidence" value="ECO:0007669"/>
    <property type="project" value="TreeGrafter"/>
</dbReference>
<dbReference type="InterPro" id="IPR004294">
    <property type="entry name" value="Carotenoid_Oase"/>
</dbReference>
<dbReference type="PANTHER" id="PTHR10543">
    <property type="entry name" value="BETA-CAROTENE DIOXYGENASE"/>
    <property type="match status" value="1"/>
</dbReference>
<dbReference type="PANTHER" id="PTHR10543:SF89">
    <property type="entry name" value="CAROTENOID 9,10(9',10')-CLEAVAGE DIOXYGENASE 1"/>
    <property type="match status" value="1"/>
</dbReference>
<dbReference type="Pfam" id="PF03055">
    <property type="entry name" value="RPE65"/>
    <property type="match status" value="1"/>
</dbReference>
<keyword id="KW-0963">Cytoplasm</keyword>
<keyword id="KW-0223">Dioxygenase</keyword>
<keyword id="KW-0408">Iron</keyword>
<keyword id="KW-0479">Metal-binding</keyword>
<keyword id="KW-0560">Oxidoreductase</keyword>
<reference key="1">
    <citation type="journal article" date="2003" name="Plant Cell">
        <title>Oxidative remodeling of chromoplast carotenoids: identification of the carotenoid dioxygenase CsCCD and CsZCD genes involved in Crocus secondary metabolite biogenesis.</title>
        <authorList>
            <person name="Bouvier F."/>
            <person name="Suire C."/>
            <person name="Mutterer J."/>
            <person name="Camara B."/>
        </authorList>
    </citation>
    <scope>NUCLEOTIDE SEQUENCE [MRNA]</scope>
    <scope>FUNCTION</scope>
    <scope>CATALYTIC ACTIVITY</scope>
    <scope>INDUCTION</scope>
    <scope>TISSUE SPECIFICITY</scope>
    <scope>SUBCELLULAR LOCATION</scope>
</reference>
<sequence length="546" mass="61697">MGEVAKEEVEERRSIVAVNPQPSKGLVSSAVDLIEKAVVYLFHDKSKPCHYLSGNFAPVVDETPPCPDLPVRGHLPECLNGEFVRVGPNPKFMPVAGYHWFDGDGMIHGMRIKDGKATYASRYVKTSRLKQEEYFEGPKFMKIGDLKGFFGLFMVQMQLLRAKLKVIDVSYGVGTGNTALIYHHGKLLALSEADKPYVVKVLEDGDLQTLGLLDYDKRLSHSFTAHPKVDPFTDEMFTFGYAHTPPYVTYRVISKDGVMRDPVPITIPASVMMHDFAITENYSIFMDLPLYFQPKEMVKGGKLIFSFDATKKARFGVLPRYAKDDSLIRWFELPNCFIFHNANAWEEGDEVVLITCRLENPDLDMVNGAVKEKLENFKNELYEMRFNMKTGAASQKQLSVSAVDFPRINESYTTRKQRYVYGTILDNITKVKGIIKFDLHAEPEAGKKKLEVGGNVQGIFDLGPGRYGSEAVFVPRERGIKSEEDDGYLIFFVHDENTGKSEVNVIDAKTMSAEPVAVVELPNRVPYGFHAFFVNEEQLQWQQTDV</sequence>